<accession>A0A250YGJ5</accession>
<keyword id="KW-0007">Acetylation</keyword>
<keyword id="KW-0012">Acyltransferase</keyword>
<keyword id="KW-0156">Chromatin regulator</keyword>
<keyword id="KW-0158">Chromosome</keyword>
<keyword id="KW-0217">Developmental protein</keyword>
<keyword id="KW-0227">DNA damage</keyword>
<keyword id="KW-0234">DNA repair</keyword>
<keyword id="KW-0238">DNA-binding</keyword>
<keyword id="KW-0256">Endoplasmic reticulum</keyword>
<keyword id="KW-0328">Glycosyltransferase</keyword>
<keyword id="KW-0378">Hydrolase</keyword>
<keyword id="KW-1017">Isopeptide bond</keyword>
<keyword id="KW-0479">Metal-binding</keyword>
<keyword id="KW-0520">NAD</keyword>
<keyword id="KW-0548">Nucleotidyltransferase</keyword>
<keyword id="KW-0539">Nucleus</keyword>
<keyword id="KW-0597">Phosphoprotein</keyword>
<keyword id="KW-1185">Reference proteome</keyword>
<keyword id="KW-0694">RNA-binding</keyword>
<keyword id="KW-0779">Telomere</keyword>
<keyword id="KW-0808">Transferase</keyword>
<keyword id="KW-0043">Tumor suppressor</keyword>
<keyword id="KW-0832">Ubl conjugation</keyword>
<keyword id="KW-0862">Zinc</keyword>
<gene>
    <name evidence="6" type="primary">SIRT6</name>
</gene>
<sequence length="355" mass="39068">MSVNYAAGLSPYADKGKCGLPEIFDPPEELERKVWELARLVRQSSNVVFHTGAGISTASGIPDFRGPHGVWTMEERGLAPKFDTTFENARPTQTHMALVQLERVGLLHFVVSQNVDGLHVRSGFPRDKLAELHGNMFVEECAKCKTQYVRDTVVGTMGLKTTGRLCTVAKARGLRACRGELRDTILDWEDALPDRDLALADEASRNADLSITLGTSLQIRPSGNLPLATKRRGGKLVIVNLQPTKHDRHADLRIHGYVDDVMTQLMKHLGLEIPAWDGPRVLEKALPPLPRPPTPKLEPTDKSLAQLNGSVPADSKPEPCTWHNGSQPASPKREQPDSPAPRRPPKRVKAEVTPS</sequence>
<proteinExistence type="evidence at protein level"/>
<comment type="function">
    <text evidence="1 2 5">NAD-dependent protein deacetylase, deacylase and mono-ADP-ribosyltransferase that plays an essential role in DNA damage repair, telomere maintenance, metabolic homeostasis, inflammation, tumorigenesis and aging (By similarity). Displays protein-lysine deacetylase or defatty-acylase (demyristoylase and depalmitoylase) activity, depending on the context (By similarity). Acts as a key histone deacetylase by catalyzing deacetylation of histone H3 at 'Lys-9', 'Lys-18' and 'Lys-56' (H3K9ac, H3K18ac and H3K56ac, respectively), suppressing target gene expression of several transcription factors, including NF-kappa-B (PubMed:31002797). Acts as an inhibitor of transcription elongation by mediating deacetylation of H3K9ac and H3K56ac, preventing release of NELFE from chromatin and causing transcriptional pausing (By similarity). Involved in DNA repair by promoting double-strand break (DSB) repair: acts as a DSB sensor by recognizing and binding DSB sites, leading to (1) recruitment of DNA repair proteins, such as SMARCA5/SNF2H, and (2) deacetylation of histone H3K9ac and H3K56ac (By similarity). SIRT6 participation to DSB repair is probably involved in extension of life span (PubMed:31002797). Also promotes DNA repair by deacetylating non-histone proteins, such as DDB2 and p53/TP53 (By similarity). Specifically deacetylates H3K18ac at pericentric heterochromatin, thereby maintaining pericentric heterochromatin silencing at centromeres and protecting against genomic instability and cellular senescence (By similarity). Involved in telomere maintenance by catalyzing deacetylation of histone H3 in telomeric chromatin, regulating telomere position effect and telomere movement in response to DNA damage (By similarity). Required for embryonic stem cell differentiation by mediating histone deacetylation of H3K9ac (By similarity). Plays a major role in metabolism by regulating processes such as glycolysis, gluconeogenesis, insulin secretion and lipid metabolism (By similarity). Inhibits glycolysis via histone deacetylase activity and by acting as a corepressor of the transcription factor HIF1A, thereby controlling the expression of multiple glycolytic genes (By similarity). Has tumor suppressor activity by repressing glycolysis, thereby inhibiting the Warburg effect (By similarity). Also regulates glycolysis and tumorigenesis by mediating deacetylation and nuclear export of non-histone proteins, such as isoform M2 of PKM (PKM2) (By similarity). Acts as a negative regulator of gluconeogenesis by mediating deacetylation of non-histone proteins, such as FOXO1 and KAT2A/GCN5 (By similarity). Promotes beta-oxidation of fatty acids during fasting by catalyzing deacetylation of NCOA2, inducing coactivation of PPARA (By similarity). Acts as a regulator of lipid catabolism in brown adipocytes, both by catalyzing deacetylation of histones and non-histone proteins, such as FOXO1 (By similarity). Also acts as a regulator of circadian rhythms, both by regulating expression of clock-controlled genes involved in lipid and carbohydrate metabolism, and by catalyzing deacetylation of PER2 (By similarity). The defatty-acylase activity is specifically involved in regulation of protein secretion (By similarity). Has high activity toward long-chain fatty acyl groups and mediates protein-lysine demyristoylation and depalmitoylation of target proteins, such as RRAS2 and TNF, thereby regulating their secretion (By similarity). Also acts as a mono-ADP-ribosyltransferase by mediating mono-ADP-ribosylation of PARP1, TRIM28/KAP1 or SMARCC2/BAF170 (By similarity). Mono-ADP-ribosyltransferase activity is involved in DNA repair, cellular senescence, repression of LINE-1 retrotransposon elements and regulation of transcription (By similarity).</text>
</comment>
<comment type="catalytic activity">
    <reaction evidence="3 5">
        <text>N(6)-acetyl-L-lysyl-[protein] + NAD(+) + H2O = 2''-O-acetyl-ADP-D-ribose + nicotinamide + L-lysyl-[protein]</text>
        <dbReference type="Rhea" id="RHEA:43636"/>
        <dbReference type="Rhea" id="RHEA-COMP:9752"/>
        <dbReference type="Rhea" id="RHEA-COMP:10731"/>
        <dbReference type="ChEBI" id="CHEBI:15377"/>
        <dbReference type="ChEBI" id="CHEBI:17154"/>
        <dbReference type="ChEBI" id="CHEBI:29969"/>
        <dbReference type="ChEBI" id="CHEBI:57540"/>
        <dbReference type="ChEBI" id="CHEBI:61930"/>
        <dbReference type="ChEBI" id="CHEBI:83767"/>
        <dbReference type="EC" id="2.3.1.286"/>
    </reaction>
    <physiologicalReaction direction="left-to-right" evidence="5">
        <dbReference type="Rhea" id="RHEA:43637"/>
    </physiologicalReaction>
</comment>
<comment type="catalytic activity">
    <reaction evidence="2">
        <text>N(6)-tetradecanoyl-L-lysyl-[protein] + NAD(+) + H2O = 2''-O-tetradecanoyl-ADP-D-ribose + nicotinamide + L-lysyl-[protein]</text>
        <dbReference type="Rhea" id="RHEA:70567"/>
        <dbReference type="Rhea" id="RHEA-COMP:9752"/>
        <dbReference type="Rhea" id="RHEA-COMP:15437"/>
        <dbReference type="ChEBI" id="CHEBI:15377"/>
        <dbReference type="ChEBI" id="CHEBI:17154"/>
        <dbReference type="ChEBI" id="CHEBI:29969"/>
        <dbReference type="ChEBI" id="CHEBI:57540"/>
        <dbReference type="ChEBI" id="CHEBI:141129"/>
        <dbReference type="ChEBI" id="CHEBI:189674"/>
    </reaction>
    <physiologicalReaction direction="left-to-right" evidence="2">
        <dbReference type="Rhea" id="RHEA:70568"/>
    </physiologicalReaction>
</comment>
<comment type="catalytic activity">
    <reaction evidence="2">
        <text>N(6)-hexadecanoyl-L-lysyl-[protein] + NAD(+) + H2O = 2''-O-hexadecanoyl-ADP-D-ribose + nicotinamide + L-lysyl-[protein]</text>
        <dbReference type="Rhea" id="RHEA:70563"/>
        <dbReference type="Rhea" id="RHEA-COMP:9752"/>
        <dbReference type="Rhea" id="RHEA-COMP:14175"/>
        <dbReference type="ChEBI" id="CHEBI:15377"/>
        <dbReference type="ChEBI" id="CHEBI:17154"/>
        <dbReference type="ChEBI" id="CHEBI:29969"/>
        <dbReference type="ChEBI" id="CHEBI:57540"/>
        <dbReference type="ChEBI" id="CHEBI:138936"/>
        <dbReference type="ChEBI" id="CHEBI:189673"/>
    </reaction>
    <physiologicalReaction direction="left-to-right" evidence="2">
        <dbReference type="Rhea" id="RHEA:70564"/>
    </physiologicalReaction>
</comment>
<comment type="catalytic activity">
    <reaction evidence="1">
        <text>L-lysyl-[protein] + NAD(+) = N(6)-(ADP-D-ribosyl)-L-lysyl-[protein] + nicotinamide + H(+)</text>
        <dbReference type="Rhea" id="RHEA:58220"/>
        <dbReference type="Rhea" id="RHEA-COMP:9752"/>
        <dbReference type="Rhea" id="RHEA-COMP:15088"/>
        <dbReference type="ChEBI" id="CHEBI:15378"/>
        <dbReference type="ChEBI" id="CHEBI:17154"/>
        <dbReference type="ChEBI" id="CHEBI:29969"/>
        <dbReference type="ChEBI" id="CHEBI:57540"/>
        <dbReference type="ChEBI" id="CHEBI:142515"/>
    </reaction>
    <physiologicalReaction direction="left-to-right" evidence="1">
        <dbReference type="Rhea" id="RHEA:58221"/>
    </physiologicalReaction>
</comment>
<comment type="catalytic activity">
    <reaction evidence="1">
        <text>L-arginyl-[protein] + NAD(+) = N(omega)-(ADP-D-ribosyl)-L-arginyl-[protein] + nicotinamide + H(+)</text>
        <dbReference type="Rhea" id="RHEA:19149"/>
        <dbReference type="Rhea" id="RHEA-COMP:10532"/>
        <dbReference type="Rhea" id="RHEA-COMP:15087"/>
        <dbReference type="ChEBI" id="CHEBI:15378"/>
        <dbReference type="ChEBI" id="CHEBI:17154"/>
        <dbReference type="ChEBI" id="CHEBI:29965"/>
        <dbReference type="ChEBI" id="CHEBI:57540"/>
        <dbReference type="ChEBI" id="CHEBI:142554"/>
    </reaction>
    <physiologicalReaction direction="left-to-right" evidence="1">
        <dbReference type="Rhea" id="RHEA:19150"/>
    </physiologicalReaction>
</comment>
<comment type="activity regulation">
    <text evidence="2">Compared to the defatty-acylase activity, the protein deacetylase activity is weak in vitro, and requires activation. The histone deacetylase activity is strongly activated upon binding to nucleosomes and chromatin in vivo. Two molecules of SIRT6 associate with the acidic patch of one nucleosome, while the C-terminal disordered region of SIRT6 associates with nucleosomal DNA, leading to efficient histone deacetylation. The protein-lysine deacetylase activity is also activated by long-chain free fatty-acids.</text>
</comment>
<comment type="subunit">
    <text evidence="1 2">Homodimer; binds to nucleosomes and DNA ends as a homodimer (By similarity). Interacts with RELA; interferes with RELA binding to target DNA (By similarity). Interacts with SMARCA5; promoting recruitment of SMARCA5/SNF2H to double-strand breaks (DSBs) sites (By similarity). Interacts with the mTORC2 complex; preventing the ability of SIRT6 to deacetylate FOXO1. Interacts with the CLOCK-BMAL1 complex; recruited by the CLOCK-BMAL1 complex to regulate expression of clock-controlled genes. Interacts with CSNK2A2; preventing CSNK2A2 localization to the nucleus (By similarity).</text>
</comment>
<comment type="subcellular location">
    <subcellularLocation>
        <location evidence="1">Nucleus</location>
    </subcellularLocation>
    <subcellularLocation>
        <location evidence="2">Chromosome</location>
    </subcellularLocation>
    <subcellularLocation>
        <location evidence="2">Chromosome</location>
        <location evidence="2">Telomere</location>
    </subcellularLocation>
    <subcellularLocation>
        <location evidence="1">Endoplasmic reticulum</location>
    </subcellularLocation>
    <text evidence="1 2">Predominantly nuclear. Associated with pericentric heterochromatin and telomeric heterochromatin regions. Localizes to DNA damage sites: directly recognizes and binds double-strand breaks (DSBs) sites via a tunnel-like structure that has high affinity for DSBs (By similarity). A fraction localizes to the endoplasmic reticulum (By similarity).</text>
</comment>
<comment type="domain">
    <text evidence="2">The C-terminal disordered region mediates non-specific DNA-binding.</text>
</comment>
<comment type="PTM">
    <text evidence="2">Acetylated at Lys-33. Deacetylation at Lys-33 by SIRT1 promotes homomultimerization and binding to double-strand breaks (DSBs) sites.</text>
</comment>
<comment type="PTM">
    <text evidence="2">Phosphorylation at Ser-10 by MAPK8/JNK1 in response to oxidative stress stimulates the mono-ADP-ribosyltransferase activity on PARP1, leading to PARP1 recruitment to double-strand breaks (DSBs).</text>
</comment>
<comment type="PTM">
    <text evidence="2">Monoubiquitinated at Lys-170 by STUB1/CHIP, preventing its degradation by the proteasome.</text>
</comment>
<comment type="PTM">
    <text evidence="2">Sumoylated, leading to specifically decrease ability to deacetylate histone H3 at 'Lys-56' (H3K56ac).</text>
</comment>
<comment type="miscellaneous">
    <text evidence="5">Compared to other rodents, beaver SIRT6 displays higher histone deacetylase activity and ability to promote double-strand break (DSB) repair, possibly leading to longer life span.</text>
</comment>
<comment type="similarity">
    <text evidence="7">Belongs to the sirtuin family. Class IV subfamily.</text>
</comment>
<evidence type="ECO:0000250" key="1">
    <source>
        <dbReference type="UniProtKB" id="P59941"/>
    </source>
</evidence>
<evidence type="ECO:0000250" key="2">
    <source>
        <dbReference type="UniProtKB" id="Q8N6T7"/>
    </source>
</evidence>
<evidence type="ECO:0000255" key="3">
    <source>
        <dbReference type="PROSITE-ProRule" id="PRU00236"/>
    </source>
</evidence>
<evidence type="ECO:0000256" key="4">
    <source>
        <dbReference type="SAM" id="MobiDB-lite"/>
    </source>
</evidence>
<evidence type="ECO:0000269" key="5">
    <source>
    </source>
</evidence>
<evidence type="ECO:0000303" key="6">
    <source>
    </source>
</evidence>
<evidence type="ECO:0000305" key="7"/>
<organism>
    <name type="scientific">Castor canadensis</name>
    <name type="common">American beaver</name>
    <dbReference type="NCBI Taxonomy" id="51338"/>
    <lineage>
        <taxon>Eukaryota</taxon>
        <taxon>Metazoa</taxon>
        <taxon>Chordata</taxon>
        <taxon>Craniata</taxon>
        <taxon>Vertebrata</taxon>
        <taxon>Euteleostomi</taxon>
        <taxon>Mammalia</taxon>
        <taxon>Eutheria</taxon>
        <taxon>Euarchontoglires</taxon>
        <taxon>Glires</taxon>
        <taxon>Rodentia</taxon>
        <taxon>Castorimorpha</taxon>
        <taxon>Castoridae</taxon>
        <taxon>Castor</taxon>
    </lineage>
</organism>
<dbReference type="EC" id="2.3.1.-" evidence="2"/>
<dbReference type="EC" id="2.3.1.286" evidence="3 5"/>
<dbReference type="EC" id="2.4.2.-" evidence="2"/>
<dbReference type="EMBL" id="MK482069">
    <property type="protein sequence ID" value="QBK17522.1"/>
    <property type="molecule type" value="mRNA"/>
</dbReference>
<dbReference type="EMBL" id="GFFW01002122">
    <property type="protein sequence ID" value="JAV42666.1"/>
    <property type="molecule type" value="Transcribed_RNA"/>
</dbReference>
<dbReference type="SMR" id="A0A250YGJ5"/>
<dbReference type="Proteomes" id="UP000694852">
    <property type="component" value="Unplaced"/>
</dbReference>
<dbReference type="GO" id="GO:0000785">
    <property type="term" value="C:chromatin"/>
    <property type="evidence" value="ECO:0000250"/>
    <property type="project" value="UniProtKB"/>
</dbReference>
<dbReference type="GO" id="GO:0000781">
    <property type="term" value="C:chromosome, telomeric region"/>
    <property type="evidence" value="ECO:0007669"/>
    <property type="project" value="UniProtKB-SubCell"/>
</dbReference>
<dbReference type="GO" id="GO:0005783">
    <property type="term" value="C:endoplasmic reticulum"/>
    <property type="evidence" value="ECO:0000250"/>
    <property type="project" value="UniProtKB"/>
</dbReference>
<dbReference type="GO" id="GO:0005634">
    <property type="term" value="C:nucleus"/>
    <property type="evidence" value="ECO:0000250"/>
    <property type="project" value="UniProtKB"/>
</dbReference>
<dbReference type="GO" id="GO:0031490">
    <property type="term" value="F:chromatin DNA binding"/>
    <property type="evidence" value="ECO:0000250"/>
    <property type="project" value="UniProtKB"/>
</dbReference>
<dbReference type="GO" id="GO:0003684">
    <property type="term" value="F:damaged DNA binding"/>
    <property type="evidence" value="ECO:0000250"/>
    <property type="project" value="UniProtKB"/>
</dbReference>
<dbReference type="GO" id="GO:0140612">
    <property type="term" value="F:DNA damage sensor activity"/>
    <property type="evidence" value="ECO:0000250"/>
    <property type="project" value="UniProtKB"/>
</dbReference>
<dbReference type="GO" id="GO:0097372">
    <property type="term" value="F:histone H3K18 deacetylase activity, NAD-dependent"/>
    <property type="evidence" value="ECO:0000315"/>
    <property type="project" value="UniProtKB"/>
</dbReference>
<dbReference type="GO" id="GO:0140765">
    <property type="term" value="F:histone H3K56 deacetylase activity, NAD-dependent"/>
    <property type="evidence" value="ECO:0000314"/>
    <property type="project" value="UniProtKB"/>
</dbReference>
<dbReference type="GO" id="GO:0046969">
    <property type="term" value="F:histone H3K9 deacetylase activity, NAD-dependent"/>
    <property type="evidence" value="ECO:0000315"/>
    <property type="project" value="UniProtKB"/>
</dbReference>
<dbReference type="GO" id="GO:0016787">
    <property type="term" value="F:hydrolase activity"/>
    <property type="evidence" value="ECO:0007669"/>
    <property type="project" value="UniProtKB-KW"/>
</dbReference>
<dbReference type="GO" id="GO:0046872">
    <property type="term" value="F:metal ion binding"/>
    <property type="evidence" value="ECO:0007669"/>
    <property type="project" value="UniProtKB-KW"/>
</dbReference>
<dbReference type="GO" id="GO:0070403">
    <property type="term" value="F:NAD+ binding"/>
    <property type="evidence" value="ECO:0007669"/>
    <property type="project" value="InterPro"/>
</dbReference>
<dbReference type="GO" id="GO:0106274">
    <property type="term" value="F:NAD+-protein-arginine ADP-ribosyltransferase activity"/>
    <property type="evidence" value="ECO:0000250"/>
    <property type="project" value="UniProtKB"/>
</dbReference>
<dbReference type="GO" id="GO:0140773">
    <property type="term" value="F:NAD-dependent protein demyristoylase activity"/>
    <property type="evidence" value="ECO:0000250"/>
    <property type="project" value="UniProtKB"/>
</dbReference>
<dbReference type="GO" id="GO:0140774">
    <property type="term" value="F:NAD-dependent protein depalmitoylase activity"/>
    <property type="evidence" value="ECO:0000250"/>
    <property type="project" value="UniProtKB"/>
</dbReference>
<dbReference type="GO" id="GO:0034979">
    <property type="term" value="F:NAD-dependent protein lysine deacetylase activity"/>
    <property type="evidence" value="ECO:0000250"/>
    <property type="project" value="UniProtKB"/>
</dbReference>
<dbReference type="GO" id="GO:0031491">
    <property type="term" value="F:nucleosome binding"/>
    <property type="evidence" value="ECO:0000250"/>
    <property type="project" value="UniProtKB"/>
</dbReference>
<dbReference type="GO" id="GO:0016779">
    <property type="term" value="F:nucleotidyltransferase activity"/>
    <property type="evidence" value="ECO:0007669"/>
    <property type="project" value="UniProtKB-KW"/>
</dbReference>
<dbReference type="GO" id="GO:0042803">
    <property type="term" value="F:protein homodimerization activity"/>
    <property type="evidence" value="ECO:0000250"/>
    <property type="project" value="UniProtKB"/>
</dbReference>
<dbReference type="GO" id="GO:0003723">
    <property type="term" value="F:RNA binding"/>
    <property type="evidence" value="ECO:0007669"/>
    <property type="project" value="UniProtKB-KW"/>
</dbReference>
<dbReference type="GO" id="GO:1904841">
    <property type="term" value="F:TORC2 complex binding"/>
    <property type="evidence" value="ECO:0000250"/>
    <property type="project" value="UniProtKB"/>
</dbReference>
<dbReference type="GO" id="GO:0003714">
    <property type="term" value="F:transcription corepressor activity"/>
    <property type="evidence" value="ECO:0007669"/>
    <property type="project" value="TreeGrafter"/>
</dbReference>
<dbReference type="GO" id="GO:0055007">
    <property type="term" value="P:cardiac muscle cell differentiation"/>
    <property type="evidence" value="ECO:0000250"/>
    <property type="project" value="UniProtKB"/>
</dbReference>
<dbReference type="GO" id="GO:0032922">
    <property type="term" value="P:circadian regulation of gene expression"/>
    <property type="evidence" value="ECO:0000250"/>
    <property type="project" value="UniProtKB"/>
</dbReference>
<dbReference type="GO" id="GO:0008340">
    <property type="term" value="P:determination of adult lifespan"/>
    <property type="evidence" value="ECO:0000315"/>
    <property type="project" value="UniProtKB"/>
</dbReference>
<dbReference type="GO" id="GO:0006302">
    <property type="term" value="P:double-strand break repair"/>
    <property type="evidence" value="ECO:0000250"/>
    <property type="project" value="UniProtKB"/>
</dbReference>
<dbReference type="GO" id="GO:0042181">
    <property type="term" value="P:ketone biosynthetic process"/>
    <property type="evidence" value="ECO:0000250"/>
    <property type="project" value="UniProtKB"/>
</dbReference>
<dbReference type="GO" id="GO:0045721">
    <property type="term" value="P:negative regulation of gluconeogenesis"/>
    <property type="evidence" value="ECO:0000250"/>
    <property type="project" value="UniProtKB"/>
</dbReference>
<dbReference type="GO" id="GO:0045820">
    <property type="term" value="P:negative regulation of glycolytic process"/>
    <property type="evidence" value="ECO:0000250"/>
    <property type="project" value="UniProtKB"/>
</dbReference>
<dbReference type="GO" id="GO:0042308">
    <property type="term" value="P:negative regulation of protein import into nucleus"/>
    <property type="evidence" value="ECO:0000250"/>
    <property type="project" value="UniProtKB"/>
</dbReference>
<dbReference type="GO" id="GO:0000122">
    <property type="term" value="P:negative regulation of transcription by RNA polymerase II"/>
    <property type="evidence" value="ECO:0000250"/>
    <property type="project" value="UniProtKB"/>
</dbReference>
<dbReference type="GO" id="GO:0034244">
    <property type="term" value="P:negative regulation of transcription elongation by RNA polymerase II"/>
    <property type="evidence" value="ECO:0000250"/>
    <property type="project" value="UniProtKB"/>
</dbReference>
<dbReference type="GO" id="GO:0031508">
    <property type="term" value="P:pericentric heterochromatin formation"/>
    <property type="evidence" value="ECO:0000250"/>
    <property type="project" value="UniProtKB"/>
</dbReference>
<dbReference type="GO" id="GO:0120162">
    <property type="term" value="P:positive regulation of cold-induced thermogenesis"/>
    <property type="evidence" value="ECO:0000250"/>
    <property type="project" value="UniProtKB"/>
</dbReference>
<dbReference type="GO" id="GO:2000781">
    <property type="term" value="P:positive regulation of double-strand break repair"/>
    <property type="evidence" value="ECO:0000315"/>
    <property type="project" value="UniProtKB"/>
</dbReference>
<dbReference type="GO" id="GO:0045600">
    <property type="term" value="P:positive regulation of fat cell differentiation"/>
    <property type="evidence" value="ECO:0000250"/>
    <property type="project" value="UniProtKB"/>
</dbReference>
<dbReference type="GO" id="GO:0032024">
    <property type="term" value="P:positive regulation of insulin secretion"/>
    <property type="evidence" value="ECO:0000250"/>
    <property type="project" value="UniProtKB"/>
</dbReference>
<dbReference type="GO" id="GO:0046827">
    <property type="term" value="P:positive regulation of protein export from nucleus"/>
    <property type="evidence" value="ECO:0000250"/>
    <property type="project" value="UniProtKB"/>
</dbReference>
<dbReference type="GO" id="GO:0120187">
    <property type="term" value="P:positive regulation of protein localization to chromatin"/>
    <property type="evidence" value="ECO:0000250"/>
    <property type="project" value="UniProtKB"/>
</dbReference>
<dbReference type="GO" id="GO:2000738">
    <property type="term" value="P:positive regulation of stem cell differentiation"/>
    <property type="evidence" value="ECO:0000250"/>
    <property type="project" value="UniProtKB"/>
</dbReference>
<dbReference type="GO" id="GO:0051697">
    <property type="term" value="P:protein delipidation"/>
    <property type="evidence" value="ECO:0000250"/>
    <property type="project" value="UniProtKB"/>
</dbReference>
<dbReference type="GO" id="GO:0031648">
    <property type="term" value="P:protein destabilization"/>
    <property type="evidence" value="ECO:0000250"/>
    <property type="project" value="UniProtKB"/>
</dbReference>
<dbReference type="GO" id="GO:0042752">
    <property type="term" value="P:regulation of circadian rhythm"/>
    <property type="evidence" value="ECO:0000250"/>
    <property type="project" value="UniProtKB"/>
</dbReference>
<dbReference type="GO" id="GO:0010569">
    <property type="term" value="P:regulation of double-strand break repair via homologous recombination"/>
    <property type="evidence" value="ECO:0000250"/>
    <property type="project" value="UniProtKB"/>
</dbReference>
<dbReference type="GO" id="GO:0050994">
    <property type="term" value="P:regulation of lipid catabolic process"/>
    <property type="evidence" value="ECO:0000250"/>
    <property type="project" value="UniProtKB"/>
</dbReference>
<dbReference type="GO" id="GO:0019216">
    <property type="term" value="P:regulation of lipid metabolic process"/>
    <property type="evidence" value="ECO:0000250"/>
    <property type="project" value="UniProtKB"/>
</dbReference>
<dbReference type="GO" id="GO:0010526">
    <property type="term" value="P:transposable element silencing"/>
    <property type="evidence" value="ECO:0000250"/>
    <property type="project" value="UniProtKB"/>
</dbReference>
<dbReference type="CDD" id="cd01410">
    <property type="entry name" value="SIRT7"/>
    <property type="match status" value="1"/>
</dbReference>
<dbReference type="FunFam" id="2.20.28.200:FF:000001">
    <property type="entry name" value="NAD-dependent protein deacetylase sirtuin-6"/>
    <property type="match status" value="1"/>
</dbReference>
<dbReference type="FunFam" id="3.40.50.1220:FF:000029">
    <property type="entry name" value="NAD-dependent protein deacetylase sirtuin-6 isoform X2"/>
    <property type="match status" value="1"/>
</dbReference>
<dbReference type="FunFam" id="3.40.50.1220:FF:000038">
    <property type="entry name" value="NAD-dependent protein deacetylase sirtuin-6 isoform X2"/>
    <property type="match status" value="1"/>
</dbReference>
<dbReference type="Gene3D" id="2.20.28.200">
    <property type="match status" value="1"/>
</dbReference>
<dbReference type="Gene3D" id="3.40.50.1220">
    <property type="entry name" value="TPP-binding domain"/>
    <property type="match status" value="1"/>
</dbReference>
<dbReference type="InterPro" id="IPR029035">
    <property type="entry name" value="DHS-like_NAD/FAD-binding_dom"/>
</dbReference>
<dbReference type="InterPro" id="IPR050134">
    <property type="entry name" value="NAD-dep_sirtuin_deacylases"/>
</dbReference>
<dbReference type="InterPro" id="IPR003000">
    <property type="entry name" value="Sirtuin"/>
</dbReference>
<dbReference type="InterPro" id="IPR026590">
    <property type="entry name" value="Ssirtuin_cat_dom"/>
</dbReference>
<dbReference type="PANTHER" id="PTHR11085">
    <property type="entry name" value="NAD-DEPENDENT PROTEIN DEACYLASE SIRTUIN-5, MITOCHONDRIAL-RELATED"/>
    <property type="match status" value="1"/>
</dbReference>
<dbReference type="PANTHER" id="PTHR11085:SF12">
    <property type="entry name" value="NAD-DEPENDENT PROTEIN DEACYLASE SIRTUIN-6"/>
    <property type="match status" value="1"/>
</dbReference>
<dbReference type="Pfam" id="PF02146">
    <property type="entry name" value="SIR2"/>
    <property type="match status" value="1"/>
</dbReference>
<dbReference type="SUPFAM" id="SSF52467">
    <property type="entry name" value="DHS-like NAD/FAD-binding domain"/>
    <property type="match status" value="1"/>
</dbReference>
<dbReference type="PROSITE" id="PS50305">
    <property type="entry name" value="SIRTUIN"/>
    <property type="match status" value="1"/>
</dbReference>
<reference key="1">
    <citation type="journal article" date="2019" name="Cell">
        <title>SIRT6 is responsible for more efficient DNA double-strand break repair in long-lived species.</title>
        <authorList>
            <person name="Tian X."/>
            <person name="Firsanov D."/>
            <person name="Zhang Z."/>
            <person name="Cheng Y."/>
            <person name="Luo L."/>
            <person name="Tombline G."/>
            <person name="Tan R."/>
            <person name="Simon M."/>
            <person name="Henderson S."/>
            <person name="Steffan J."/>
            <person name="Goldfarb A."/>
            <person name="Tam J."/>
            <person name="Zheng K."/>
            <person name="Cornwell A."/>
            <person name="Johnson A."/>
            <person name="Yang J.N."/>
            <person name="Mao Z."/>
            <person name="Manta B."/>
            <person name="Dang W."/>
            <person name="Zhang Z."/>
            <person name="Vijg J."/>
            <person name="Wolfe A."/>
            <person name="Moody K."/>
            <person name="Kennedy B.K."/>
            <person name="Bohmann D."/>
            <person name="Gladyshev V.N."/>
            <person name="Seluanov A."/>
            <person name="Gorbunova V."/>
        </authorList>
    </citation>
    <scope>NUCLEOTIDE SEQUENCE [MRNA]</scope>
    <scope>FUNCTION</scope>
    <scope>CATALYTIC ACTIVITY</scope>
</reference>
<reference key="2">
    <citation type="journal article" date="2017" name="G3 (Bethesda)">
        <title>De Novo Genome and Transcriptome Assembly of the Canadian Beaver (Castor canadensis).</title>
        <authorList>
            <person name="Lok S."/>
            <person name="Paton T.A."/>
            <person name="Wang Z."/>
            <person name="Kaur G."/>
            <person name="Walker S."/>
            <person name="Yuen R.K."/>
            <person name="Sung W.W."/>
            <person name="Whitney J."/>
            <person name="Buchanan J.A."/>
            <person name="Trost B."/>
            <person name="Singh N."/>
            <person name="Apresto B."/>
            <person name="Chen N."/>
            <person name="Coole M."/>
            <person name="Dawson T.J."/>
            <person name="Ho K.Y."/>
            <person name="Hu Z."/>
            <person name="Pullenayegum S."/>
            <person name="Samler K."/>
            <person name="Shipstone A."/>
            <person name="Tsoi F."/>
            <person name="Wang T."/>
            <person name="Pereira S.L."/>
            <person name="Rostami P."/>
            <person name="Ryan C.A."/>
            <person name="Tong A.H."/>
            <person name="Ng K."/>
            <person name="Sundaravadanam Y."/>
            <person name="Simpson J.T."/>
            <person name="Lim B.K."/>
            <person name="Engstrom M.D."/>
            <person name="Dutton C.J."/>
            <person name="Kerr K.C."/>
            <person name="Franke M."/>
            <person name="Rapley W."/>
            <person name="Wintle R.F."/>
            <person name="Scherer S.W."/>
        </authorList>
    </citation>
    <scope>NUCLEOTIDE SEQUENCE [LARGE SCALE GENOMIC DNA]</scope>
    <source>
        <strain>Ward</strain>
    </source>
</reference>
<protein>
    <recommendedName>
        <fullName evidence="7">NAD-dependent protein deacylase sirtuin-6</fullName>
        <ecNumber evidence="2">2.3.1.-</ecNumber>
    </recommendedName>
    <alternativeName>
        <fullName evidence="7">NAD-dependent protein deacetylase sirtuin-6</fullName>
        <ecNumber evidence="3 5">2.3.1.286</ecNumber>
    </alternativeName>
    <alternativeName>
        <fullName evidence="7">Protein mono-ADP-ribosyltransferase sirtuin-6</fullName>
        <ecNumber evidence="2">2.4.2.-</ecNumber>
    </alternativeName>
</protein>
<name>SIR6_CASCN</name>
<feature type="initiator methionine" description="Removed" evidence="2">
    <location>
        <position position="1"/>
    </location>
</feature>
<feature type="chain" id="PRO_0000455607" description="NAD-dependent protein deacylase sirtuin-6">
    <location>
        <begin position="2"/>
        <end position="355"/>
    </location>
</feature>
<feature type="domain" description="Deacetylase sirtuin-type" evidence="3">
    <location>
        <begin position="27"/>
        <end position="272"/>
    </location>
</feature>
<feature type="region of interest" description="Disordered" evidence="4">
    <location>
        <begin position="284"/>
        <end position="355"/>
    </location>
</feature>
<feature type="compositionally biased region" description="Pro residues" evidence="4">
    <location>
        <begin position="287"/>
        <end position="296"/>
    </location>
</feature>
<feature type="active site" description="Proton acceptor" evidence="3">
    <location>
        <position position="133"/>
    </location>
</feature>
<feature type="binding site" evidence="2">
    <location>
        <position position="53"/>
    </location>
    <ligand>
        <name>NAD(+)</name>
        <dbReference type="ChEBI" id="CHEBI:57540"/>
    </ligand>
</feature>
<feature type="binding site" evidence="2">
    <location>
        <position position="57"/>
    </location>
    <ligand>
        <name>NAD(+)</name>
        <dbReference type="ChEBI" id="CHEBI:57540"/>
    </ligand>
</feature>
<feature type="binding site" evidence="2">
    <location>
        <position position="64"/>
    </location>
    <ligand>
        <name>NAD(+)</name>
        <dbReference type="ChEBI" id="CHEBI:57540"/>
    </ligand>
</feature>
<feature type="binding site" evidence="2">
    <location>
        <position position="65"/>
    </location>
    <ligand>
        <name>NAD(+)</name>
        <dbReference type="ChEBI" id="CHEBI:57540"/>
    </ligand>
</feature>
<feature type="binding site" evidence="2">
    <location>
        <position position="71"/>
    </location>
    <ligand>
        <name>NAD(+)</name>
        <dbReference type="ChEBI" id="CHEBI:57540"/>
    </ligand>
</feature>
<feature type="binding site" evidence="2">
    <location>
        <position position="113"/>
    </location>
    <ligand>
        <name>NAD(+)</name>
        <dbReference type="ChEBI" id="CHEBI:57540"/>
    </ligand>
</feature>
<feature type="binding site" evidence="2">
    <location>
        <position position="133"/>
    </location>
    <ligand>
        <name>NAD(+)</name>
        <dbReference type="ChEBI" id="CHEBI:57540"/>
    </ligand>
</feature>
<feature type="binding site" evidence="2 3">
    <location>
        <position position="141"/>
    </location>
    <ligand>
        <name>Zn(2+)</name>
        <dbReference type="ChEBI" id="CHEBI:29105"/>
    </ligand>
</feature>
<feature type="binding site" evidence="2 3">
    <location>
        <position position="144"/>
    </location>
    <ligand>
        <name>Zn(2+)</name>
        <dbReference type="ChEBI" id="CHEBI:29105"/>
    </ligand>
</feature>
<feature type="binding site" evidence="2 3">
    <location>
        <position position="166"/>
    </location>
    <ligand>
        <name>Zn(2+)</name>
        <dbReference type="ChEBI" id="CHEBI:29105"/>
    </ligand>
</feature>
<feature type="binding site" evidence="2 3">
    <location>
        <position position="177"/>
    </location>
    <ligand>
        <name>Zn(2+)</name>
        <dbReference type="ChEBI" id="CHEBI:29105"/>
    </ligand>
</feature>
<feature type="binding site" evidence="2">
    <location>
        <position position="214"/>
    </location>
    <ligand>
        <name>NAD(+)</name>
        <dbReference type="ChEBI" id="CHEBI:57540"/>
    </ligand>
</feature>
<feature type="binding site" evidence="2">
    <location>
        <position position="216"/>
    </location>
    <ligand>
        <name>NAD(+)</name>
        <dbReference type="ChEBI" id="CHEBI:57540"/>
    </ligand>
</feature>
<feature type="binding site" evidence="2">
    <location>
        <position position="240"/>
    </location>
    <ligand>
        <name>NAD(+)</name>
        <dbReference type="ChEBI" id="CHEBI:57540"/>
    </ligand>
</feature>
<feature type="binding site" evidence="2">
    <location>
        <position position="242"/>
    </location>
    <ligand>
        <name>NAD(+)</name>
        <dbReference type="ChEBI" id="CHEBI:57540"/>
    </ligand>
</feature>
<feature type="binding site" evidence="2">
    <location>
        <position position="258"/>
    </location>
    <ligand>
        <name>NAD(+)</name>
        <dbReference type="ChEBI" id="CHEBI:57540"/>
    </ligand>
</feature>
<feature type="modified residue" description="N-acetylserine" evidence="2">
    <location>
        <position position="2"/>
    </location>
</feature>
<feature type="modified residue" description="Phosphoserine" evidence="2">
    <location>
        <position position="10"/>
    </location>
</feature>
<feature type="modified residue" description="N6-acetyllysine" evidence="2">
    <location>
        <position position="33"/>
    </location>
</feature>
<feature type="modified residue" description="Phosphothreonine" evidence="2">
    <location>
        <position position="294"/>
    </location>
</feature>
<feature type="modified residue" description="Phosphoserine" evidence="2">
    <location>
        <position position="303"/>
    </location>
</feature>
<feature type="modified residue" description="Phosphoserine" evidence="2">
    <location>
        <position position="330"/>
    </location>
</feature>
<feature type="cross-link" description="Glycyl lysine isopeptide (Lys-Gly) (interchain with G-Cter in ubiquitin)" evidence="2">
    <location>
        <position position="170"/>
    </location>
</feature>